<organism>
    <name type="scientific">Bacillus subtilis (strain 168)</name>
    <dbReference type="NCBI Taxonomy" id="224308"/>
    <lineage>
        <taxon>Bacteria</taxon>
        <taxon>Bacillati</taxon>
        <taxon>Bacillota</taxon>
        <taxon>Bacilli</taxon>
        <taxon>Bacillales</taxon>
        <taxon>Bacillaceae</taxon>
        <taxon>Bacillus</taxon>
    </lineage>
</organism>
<keyword id="KW-1003">Cell membrane</keyword>
<keyword id="KW-0472">Membrane</keyword>
<keyword id="KW-1185">Reference proteome</keyword>
<keyword id="KW-0812">Transmembrane</keyword>
<keyword id="KW-1133">Transmembrane helix</keyword>
<name>YEBA_BACSU</name>
<accession>P94476</accession>
<accession>Q797B6</accession>
<feature type="chain" id="PRO_0000360581" description="Uncharacterized protein YebA">
    <location>
        <begin position="1"/>
        <end position="737"/>
    </location>
</feature>
<feature type="transmembrane region" description="Helical" evidence="1">
    <location>
        <begin position="11"/>
        <end position="31"/>
    </location>
</feature>
<feature type="transmembrane region" description="Helical" evidence="1">
    <location>
        <begin position="36"/>
        <end position="56"/>
    </location>
</feature>
<feature type="transmembrane region" description="Helical" evidence="1">
    <location>
        <begin position="60"/>
        <end position="80"/>
    </location>
</feature>
<feature type="transmembrane region" description="Helical" evidence="1">
    <location>
        <begin position="118"/>
        <end position="138"/>
    </location>
</feature>
<feature type="transmembrane region" description="Helical" evidence="1">
    <location>
        <begin position="142"/>
        <end position="162"/>
    </location>
</feature>
<feature type="transmembrane region" description="Helical" evidence="1">
    <location>
        <begin position="164"/>
        <end position="184"/>
    </location>
</feature>
<feature type="transmembrane region" description="Helical" evidence="1">
    <location>
        <begin position="200"/>
        <end position="220"/>
    </location>
</feature>
<feature type="transmembrane region" description="Helical" evidence="1">
    <location>
        <begin position="618"/>
        <end position="638"/>
    </location>
</feature>
<feature type="region of interest" description="Disordered" evidence="2">
    <location>
        <begin position="556"/>
        <end position="611"/>
    </location>
</feature>
<feature type="compositionally biased region" description="Basic and acidic residues" evidence="2">
    <location>
        <begin position="581"/>
        <end position="603"/>
    </location>
</feature>
<feature type="sequence conflict" description="In Ref. 1; AAB62310." evidence="3" ref="1">
    <original>PSA</original>
    <variation>AVP</variation>
    <location>
        <begin position="607"/>
        <end position="609"/>
    </location>
</feature>
<feature type="sequence conflict" description="In Ref. 1; AAB62310." evidence="3" ref="1">
    <original>G</original>
    <variation>A</variation>
    <location>
        <position position="675"/>
    </location>
</feature>
<comment type="subcellular location">
    <subcellularLocation>
        <location evidence="3">Cell membrane</location>
        <topology evidence="3">Multi-pass membrane protein</topology>
    </subcellularLocation>
</comment>
<comment type="sequence caution" evidence="3">
    <conflict type="frameshift">
        <sequence resource="EMBL-CDS" id="AAB62310"/>
    </conflict>
</comment>
<protein>
    <recommendedName>
        <fullName>Uncharacterized protein YebA</fullName>
    </recommendedName>
</protein>
<sequence>MPHDDHKGSRLSLLLFYFLAFLLLWEWLRPLDSFTETKHTGFFSVFIGLTFLLTFFRMRWFVTVPFCVIFTLISIHILFYQGSIFDLSWVSSFLQDVYLNITLIQSGQWNDMIPSFRTLLFFVLLWLLVYLLHYWVIYQRRILFFFLMTVAYITILDTFTPYDATFAVIRIVLIGFFMLGLLYLERIKLMERITLPKTSVLKWFLPLSVLVLAATGFGLAAPKSEPAWPDPVPFLKKITHQDRVSAGESKIGYGNHDESLGGPFQQDATPVFTWQGKERTYFRVETKDTYTGKGWIETDTGMSYQLSNGKVENLWFDHKVATERRTVRVKVDKHYGYNHLMYPIGAETIQPKQAVSLEMNGNTEQISPISEQAGEIRNMGNYTVTYNSPVYKLDELRKVKVRKNSEEYTFSDRYMQLPDSLPERVRTLAIKLTQDHDNMFDKVKAVEDYLGSNAFTYETENVTIPKNDEDYVDQFLFETKMGYCDNFSSAMVVLLRSAGIPARWVKGYTSGEYKEAGNKNGSIYEVTNNNAHSWVEVYFPEQGWVTFEPTKGFTNPAQFTSSDTKDSGSDSSSSPKKAKEKQKEEKKQPQKEEKQKEKREPAVSKKPSASHTNAGAGLYAALAVLAVLLVAAVLLYVFRSLWIPVFAVRKLKRRSDQHAFFEAYGALLKQLKRKGLPKRDSETLRDYAKRIDEKYDIEDMSKLTLSYERALYRNEDSSALWNDSRELWENLIKRRWS</sequence>
<gene>
    <name type="primary">yebA</name>
    <name type="ordered locus">BSU06350</name>
</gene>
<evidence type="ECO:0000255" key="1"/>
<evidence type="ECO:0000256" key="2">
    <source>
        <dbReference type="SAM" id="MobiDB-lite"/>
    </source>
</evidence>
<evidence type="ECO:0000305" key="3"/>
<dbReference type="EMBL" id="U51115">
    <property type="protein sequence ID" value="AAB62310.1"/>
    <property type="status" value="ALT_FRAME"/>
    <property type="molecule type" value="Genomic_DNA"/>
</dbReference>
<dbReference type="EMBL" id="AL009126">
    <property type="protein sequence ID" value="CAB12454.2"/>
    <property type="molecule type" value="Genomic_DNA"/>
</dbReference>
<dbReference type="PIR" id="E69791">
    <property type="entry name" value="E69791"/>
</dbReference>
<dbReference type="RefSeq" id="NP_388516.2">
    <property type="nucleotide sequence ID" value="NC_000964.3"/>
</dbReference>
<dbReference type="RefSeq" id="WP_003242683.1">
    <property type="nucleotide sequence ID" value="NZ_OZ025638.1"/>
</dbReference>
<dbReference type="SMR" id="P94476"/>
<dbReference type="FunCoup" id="P94476">
    <property type="interactions" value="203"/>
</dbReference>
<dbReference type="STRING" id="224308.BSU06350"/>
<dbReference type="PaxDb" id="224308-BSU06350"/>
<dbReference type="EnsemblBacteria" id="CAB12454">
    <property type="protein sequence ID" value="CAB12454"/>
    <property type="gene ID" value="BSU_06350"/>
</dbReference>
<dbReference type="GeneID" id="936029"/>
<dbReference type="KEGG" id="bsu:BSU06350"/>
<dbReference type="PATRIC" id="fig|224308.179.peg.689"/>
<dbReference type="eggNOG" id="COG1305">
    <property type="taxonomic scope" value="Bacteria"/>
</dbReference>
<dbReference type="InParanoid" id="P94476"/>
<dbReference type="OrthoDB" id="9804872at2"/>
<dbReference type="PhylomeDB" id="P94476"/>
<dbReference type="BioCyc" id="BSUB:BSU06350-MONOMER"/>
<dbReference type="Proteomes" id="UP000001570">
    <property type="component" value="Chromosome"/>
</dbReference>
<dbReference type="GO" id="GO:0005886">
    <property type="term" value="C:plasma membrane"/>
    <property type="evidence" value="ECO:0007669"/>
    <property type="project" value="UniProtKB-SubCell"/>
</dbReference>
<dbReference type="Gene3D" id="3.10.620.30">
    <property type="match status" value="1"/>
</dbReference>
<dbReference type="InterPro" id="IPR052901">
    <property type="entry name" value="Bact_TGase-like"/>
</dbReference>
<dbReference type="InterPro" id="IPR038765">
    <property type="entry name" value="Papain-like_cys_pep_sf"/>
</dbReference>
<dbReference type="InterPro" id="IPR025403">
    <property type="entry name" value="TgpA-like_C"/>
</dbReference>
<dbReference type="InterPro" id="IPR021878">
    <property type="entry name" value="TgpA_N"/>
</dbReference>
<dbReference type="InterPro" id="IPR002931">
    <property type="entry name" value="Transglutaminase-like"/>
</dbReference>
<dbReference type="PANTHER" id="PTHR42736">
    <property type="entry name" value="PROTEIN-GLUTAMINE GAMMA-GLUTAMYLTRANSFERASE"/>
    <property type="match status" value="1"/>
</dbReference>
<dbReference type="PANTHER" id="PTHR42736:SF1">
    <property type="entry name" value="PROTEIN-GLUTAMINE GAMMA-GLUTAMYLTRANSFERASE"/>
    <property type="match status" value="1"/>
</dbReference>
<dbReference type="Pfam" id="PF13559">
    <property type="entry name" value="DUF4129"/>
    <property type="match status" value="1"/>
</dbReference>
<dbReference type="Pfam" id="PF11992">
    <property type="entry name" value="TgpA_N"/>
    <property type="match status" value="1"/>
</dbReference>
<dbReference type="Pfam" id="PF01841">
    <property type="entry name" value="Transglut_core"/>
    <property type="match status" value="1"/>
</dbReference>
<dbReference type="SMART" id="SM00460">
    <property type="entry name" value="TGc"/>
    <property type="match status" value="1"/>
</dbReference>
<dbReference type="SUPFAM" id="SSF54001">
    <property type="entry name" value="Cysteine proteinases"/>
    <property type="match status" value="1"/>
</dbReference>
<proteinExistence type="predicted"/>
<reference key="1">
    <citation type="journal article" date="1996" name="Microbiology">
        <title>The 52 degrees-55 degrees segment of the Bacillus subtilis chromosome: a region devoted to purine uptake and metabolism, and containing the genes cotA, gabP and guaA and the pur gene cluster within a 34960 bp nucleotide sequence.</title>
        <authorList>
            <person name="Borriss R."/>
            <person name="Porwollik S."/>
            <person name="Schroeter R."/>
        </authorList>
    </citation>
    <scope>NUCLEOTIDE SEQUENCE [GENOMIC DNA]</scope>
    <source>
        <strain>168</strain>
    </source>
</reference>
<reference key="2">
    <citation type="journal article" date="1997" name="Nature">
        <title>The complete genome sequence of the Gram-positive bacterium Bacillus subtilis.</title>
        <authorList>
            <person name="Kunst F."/>
            <person name="Ogasawara N."/>
            <person name="Moszer I."/>
            <person name="Albertini A.M."/>
            <person name="Alloni G."/>
            <person name="Azevedo V."/>
            <person name="Bertero M.G."/>
            <person name="Bessieres P."/>
            <person name="Bolotin A."/>
            <person name="Borchert S."/>
            <person name="Borriss R."/>
            <person name="Boursier L."/>
            <person name="Brans A."/>
            <person name="Braun M."/>
            <person name="Brignell S.C."/>
            <person name="Bron S."/>
            <person name="Brouillet S."/>
            <person name="Bruschi C.V."/>
            <person name="Caldwell B."/>
            <person name="Capuano V."/>
            <person name="Carter N.M."/>
            <person name="Choi S.-K."/>
            <person name="Codani J.-J."/>
            <person name="Connerton I.F."/>
            <person name="Cummings N.J."/>
            <person name="Daniel R.A."/>
            <person name="Denizot F."/>
            <person name="Devine K.M."/>
            <person name="Duesterhoeft A."/>
            <person name="Ehrlich S.D."/>
            <person name="Emmerson P.T."/>
            <person name="Entian K.-D."/>
            <person name="Errington J."/>
            <person name="Fabret C."/>
            <person name="Ferrari E."/>
            <person name="Foulger D."/>
            <person name="Fritz C."/>
            <person name="Fujita M."/>
            <person name="Fujita Y."/>
            <person name="Fuma S."/>
            <person name="Galizzi A."/>
            <person name="Galleron N."/>
            <person name="Ghim S.-Y."/>
            <person name="Glaser P."/>
            <person name="Goffeau A."/>
            <person name="Golightly E.J."/>
            <person name="Grandi G."/>
            <person name="Guiseppi G."/>
            <person name="Guy B.J."/>
            <person name="Haga K."/>
            <person name="Haiech J."/>
            <person name="Harwood C.R."/>
            <person name="Henaut A."/>
            <person name="Hilbert H."/>
            <person name="Holsappel S."/>
            <person name="Hosono S."/>
            <person name="Hullo M.-F."/>
            <person name="Itaya M."/>
            <person name="Jones L.-M."/>
            <person name="Joris B."/>
            <person name="Karamata D."/>
            <person name="Kasahara Y."/>
            <person name="Klaerr-Blanchard M."/>
            <person name="Klein C."/>
            <person name="Kobayashi Y."/>
            <person name="Koetter P."/>
            <person name="Koningstein G."/>
            <person name="Krogh S."/>
            <person name="Kumano M."/>
            <person name="Kurita K."/>
            <person name="Lapidus A."/>
            <person name="Lardinois S."/>
            <person name="Lauber J."/>
            <person name="Lazarevic V."/>
            <person name="Lee S.-M."/>
            <person name="Levine A."/>
            <person name="Liu H."/>
            <person name="Masuda S."/>
            <person name="Mauel C."/>
            <person name="Medigue C."/>
            <person name="Medina N."/>
            <person name="Mellado R.P."/>
            <person name="Mizuno M."/>
            <person name="Moestl D."/>
            <person name="Nakai S."/>
            <person name="Noback M."/>
            <person name="Noone D."/>
            <person name="O'Reilly M."/>
            <person name="Ogawa K."/>
            <person name="Ogiwara A."/>
            <person name="Oudega B."/>
            <person name="Park S.-H."/>
            <person name="Parro V."/>
            <person name="Pohl T.M."/>
            <person name="Portetelle D."/>
            <person name="Porwollik S."/>
            <person name="Prescott A.M."/>
            <person name="Presecan E."/>
            <person name="Pujic P."/>
            <person name="Purnelle B."/>
            <person name="Rapoport G."/>
            <person name="Rey M."/>
            <person name="Reynolds S."/>
            <person name="Rieger M."/>
            <person name="Rivolta C."/>
            <person name="Rocha E."/>
            <person name="Roche B."/>
            <person name="Rose M."/>
            <person name="Sadaie Y."/>
            <person name="Sato T."/>
            <person name="Scanlan E."/>
            <person name="Schleich S."/>
            <person name="Schroeter R."/>
            <person name="Scoffone F."/>
            <person name="Sekiguchi J."/>
            <person name="Sekowska A."/>
            <person name="Seror S.J."/>
            <person name="Serror P."/>
            <person name="Shin B.-S."/>
            <person name="Soldo B."/>
            <person name="Sorokin A."/>
            <person name="Tacconi E."/>
            <person name="Takagi T."/>
            <person name="Takahashi H."/>
            <person name="Takemaru K."/>
            <person name="Takeuchi M."/>
            <person name="Tamakoshi A."/>
            <person name="Tanaka T."/>
            <person name="Terpstra P."/>
            <person name="Tognoni A."/>
            <person name="Tosato V."/>
            <person name="Uchiyama S."/>
            <person name="Vandenbol M."/>
            <person name="Vannier F."/>
            <person name="Vassarotti A."/>
            <person name="Viari A."/>
            <person name="Wambutt R."/>
            <person name="Wedler E."/>
            <person name="Wedler H."/>
            <person name="Weitzenegger T."/>
            <person name="Winters P."/>
            <person name="Wipat A."/>
            <person name="Yamamoto H."/>
            <person name="Yamane K."/>
            <person name="Yasumoto K."/>
            <person name="Yata K."/>
            <person name="Yoshida K."/>
            <person name="Yoshikawa H.-F."/>
            <person name="Zumstein E."/>
            <person name="Yoshikawa H."/>
            <person name="Danchin A."/>
        </authorList>
    </citation>
    <scope>NUCLEOTIDE SEQUENCE [LARGE SCALE GENOMIC DNA]</scope>
    <source>
        <strain>168</strain>
    </source>
</reference>
<reference key="3">
    <citation type="journal article" date="2009" name="Microbiology">
        <title>From a consortium sequence to a unified sequence: the Bacillus subtilis 168 reference genome a decade later.</title>
        <authorList>
            <person name="Barbe V."/>
            <person name="Cruveiller S."/>
            <person name="Kunst F."/>
            <person name="Lenoble P."/>
            <person name="Meurice G."/>
            <person name="Sekowska A."/>
            <person name="Vallenet D."/>
            <person name="Wang T."/>
            <person name="Moszer I."/>
            <person name="Medigue C."/>
            <person name="Danchin A."/>
        </authorList>
    </citation>
    <scope>SEQUENCE REVISION</scope>
</reference>